<sequence>MGEDKREIKDITDLPGVGPTTAQKLMEAGYTTLEAIAAATPQEVSQATGIPILTAQKIVDAAREALNIDFKTAYDLKIESMNIKKITTGSRNLDELLGGGIETKTITELFGEFGSGKTQICHQLSVNVQLPEDKGGLEGKAVYIDTEGTFRWERIEQMARGVGLDPDEVMKNIYWIRAINSHHQIAIVDKLFTMVKNDNIKLVVVDSVTSHFRAEFPGRENLAMRQQLLNRHLHQLMRLADIFNVAVVITNQVMARPDVFYGDPTQAVGGHVLGHAPGVRVYLKKSRGNKRIARVVDAPHLPEGETVFAITEWGIRDPE</sequence>
<evidence type="ECO:0000250" key="1"/>
<evidence type="ECO:0000255" key="2"/>
<evidence type="ECO:0000305" key="3"/>
<protein>
    <recommendedName>
        <fullName>DNA repair and recombination protein RadA</fullName>
    </recommendedName>
</protein>
<proteinExistence type="inferred from homology"/>
<organism>
    <name type="scientific">Aeropyrum pernix</name>
    <dbReference type="NCBI Taxonomy" id="56636"/>
    <lineage>
        <taxon>Archaea</taxon>
        <taxon>Thermoproteota</taxon>
        <taxon>Thermoprotei</taxon>
        <taxon>Desulfurococcales</taxon>
        <taxon>Desulfurococcaceae</taxon>
        <taxon>Aeropyrum</taxon>
    </lineage>
</organism>
<feature type="chain" id="PRO_0000409306" description="DNA repair and recombination protein RadA">
    <location>
        <begin position="1"/>
        <end position="319"/>
    </location>
</feature>
<feature type="binding site" evidence="2">
    <location>
        <begin position="111"/>
        <end position="118"/>
    </location>
    <ligand>
        <name>ATP</name>
        <dbReference type="ChEBI" id="CHEBI:30616"/>
    </ligand>
</feature>
<feature type="sequence variant" description="In strain: TB2.">
    <original>K</original>
    <variation>N</variation>
    <location>
        <position position="5"/>
    </location>
</feature>
<feature type="sequence variant" description="In strain: TB1.">
    <original>K</original>
    <variation>Q</variation>
    <location>
        <position position="5"/>
    </location>
</feature>
<feature type="sequence variant" description="In strain: OH3.">
    <original>I</original>
    <variation>T</variation>
    <location>
        <position position="58"/>
    </location>
</feature>
<feature type="sequence variant" description="In strain: OH2.">
    <original>K</original>
    <variation>R</variation>
    <location>
        <position position="201"/>
    </location>
</feature>
<feature type="sequence variant" description="In strain: OH3.">
    <original>A</original>
    <variation>V</variation>
    <location>
        <position position="214"/>
    </location>
</feature>
<feature type="sequence variant" description="In strain: TB1.">
    <original>S</original>
    <variation>G</variation>
    <location>
        <position position="286"/>
    </location>
</feature>
<feature type="sequence variant" description="In strain: OH3.">
    <original>N</original>
    <variation>D</variation>
    <location>
        <position position="289"/>
    </location>
</feature>
<feature type="sequence variant" description="In strain: TB2.">
    <original>N</original>
    <variation>S</variation>
    <location>
        <position position="289"/>
    </location>
</feature>
<feature type="sequence variant" description="In strain: TB6.">
    <original>T</original>
    <variation>A</variation>
    <location>
        <position position="306"/>
    </location>
</feature>
<accession>P0CW91</accession>
<accession>Q8X233</accession>
<accession>Q8X263</accession>
<accession>Q8X264</accession>
<accession>Q8X265</accession>
<accession>Q8X266</accession>
<accession>Q8X267</accession>
<accession>Q9YFY1</accession>
<keyword id="KW-0067">ATP-binding</keyword>
<keyword id="KW-0227">DNA damage</keyword>
<keyword id="KW-0233">DNA recombination</keyword>
<keyword id="KW-0238">DNA-binding</keyword>
<keyword id="KW-0547">Nucleotide-binding</keyword>
<reference key="1">
    <citation type="submission" date="2002-01" db="EMBL/GenBank/DDBJ databases">
        <title>Heterogeneous yet partially similar introns reside in identical positions of the rRNA genes in natural isolates of the archaeon Aeropyrum pernix.</title>
        <authorList>
            <person name="Nomura N."/>
            <person name="Morinaga Y."/>
            <person name="Kogishi T."/>
            <person name="Kim E."/>
            <person name="Sako Y."/>
            <person name="Uchida A."/>
        </authorList>
    </citation>
    <scope>NUCLEOTIDE SEQUENCE [GENOMIC DNA]</scope>
    <source>
        <strain>OH1</strain>
        <strain>OH2</strain>
        <strain>OH3</strain>
        <strain>TB1</strain>
        <strain>TB2</strain>
        <strain>TB3</strain>
        <strain>TB4</strain>
        <strain>TB5</strain>
        <strain>TB6</strain>
        <strain>TB7</strain>
        <strain>TB8</strain>
    </source>
</reference>
<comment type="function">
    <text evidence="1">Involved in DNA repair and in homologous recombination. Binds and assemble on single-stranded DNA to form a nucleoprotein filament. Hydrolyzes ATP in a ssDNA-dependent manner and promotes DNA strand exchange between homologous DNA molecules (By similarity).</text>
</comment>
<comment type="similarity">
    <text evidence="3">Belongs to the eukaryotic RecA-like protein family.</text>
</comment>
<dbReference type="EMBL" id="AB077994">
    <property type="protein sequence ID" value="BAB83900.1"/>
    <property type="molecule type" value="Genomic_DNA"/>
</dbReference>
<dbReference type="EMBL" id="AB077995">
    <property type="protein sequence ID" value="BAB83901.1"/>
    <property type="molecule type" value="Genomic_DNA"/>
</dbReference>
<dbReference type="EMBL" id="AB077996">
    <property type="protein sequence ID" value="BAB83902.1"/>
    <property type="molecule type" value="Genomic_DNA"/>
</dbReference>
<dbReference type="EMBL" id="AB077997">
    <property type="protein sequence ID" value="BAB83903.1"/>
    <property type="molecule type" value="Genomic_DNA"/>
</dbReference>
<dbReference type="EMBL" id="AB077998">
    <property type="protein sequence ID" value="BAB83904.1"/>
    <property type="molecule type" value="Genomic_DNA"/>
</dbReference>
<dbReference type="EMBL" id="AB077999">
    <property type="protein sequence ID" value="BAB83905.1"/>
    <property type="molecule type" value="Genomic_DNA"/>
</dbReference>
<dbReference type="EMBL" id="AB078000">
    <property type="protein sequence ID" value="BAB83906.1"/>
    <property type="molecule type" value="Genomic_DNA"/>
</dbReference>
<dbReference type="EMBL" id="AB078001">
    <property type="protein sequence ID" value="BAB83907.1"/>
    <property type="molecule type" value="Genomic_DNA"/>
</dbReference>
<dbReference type="EMBL" id="AB078002">
    <property type="protein sequence ID" value="BAB83908.1"/>
    <property type="molecule type" value="Genomic_DNA"/>
</dbReference>
<dbReference type="EMBL" id="AB078003">
    <property type="protein sequence ID" value="BAB83909.1"/>
    <property type="molecule type" value="Genomic_DNA"/>
</dbReference>
<dbReference type="EMBL" id="AB078004">
    <property type="protein sequence ID" value="BAB83910.1"/>
    <property type="molecule type" value="Genomic_DNA"/>
</dbReference>
<dbReference type="SMR" id="P0CW91"/>
<dbReference type="GO" id="GO:0005524">
    <property type="term" value="F:ATP binding"/>
    <property type="evidence" value="ECO:0007669"/>
    <property type="project" value="UniProtKB-UniRule"/>
</dbReference>
<dbReference type="GO" id="GO:0016887">
    <property type="term" value="F:ATP hydrolysis activity"/>
    <property type="evidence" value="ECO:0007669"/>
    <property type="project" value="InterPro"/>
</dbReference>
<dbReference type="GO" id="GO:0140664">
    <property type="term" value="F:ATP-dependent DNA damage sensor activity"/>
    <property type="evidence" value="ECO:0007669"/>
    <property type="project" value="InterPro"/>
</dbReference>
<dbReference type="GO" id="GO:0003684">
    <property type="term" value="F:damaged DNA binding"/>
    <property type="evidence" value="ECO:0007669"/>
    <property type="project" value="UniProtKB-UniRule"/>
</dbReference>
<dbReference type="GO" id="GO:0006310">
    <property type="term" value="P:DNA recombination"/>
    <property type="evidence" value="ECO:0007669"/>
    <property type="project" value="UniProtKB-UniRule"/>
</dbReference>
<dbReference type="GO" id="GO:0006281">
    <property type="term" value="P:DNA repair"/>
    <property type="evidence" value="ECO:0007669"/>
    <property type="project" value="UniProtKB-UniRule"/>
</dbReference>
<dbReference type="CDD" id="cd19515">
    <property type="entry name" value="archRadA"/>
    <property type="match status" value="1"/>
</dbReference>
<dbReference type="FunFam" id="3.40.50.300:FF:002052">
    <property type="entry name" value="DNA repair protein RAD51 homolog"/>
    <property type="match status" value="1"/>
</dbReference>
<dbReference type="Gene3D" id="1.10.150.20">
    <property type="entry name" value="5' to 3' exonuclease, C-terminal subdomain"/>
    <property type="match status" value="1"/>
</dbReference>
<dbReference type="Gene3D" id="3.40.50.300">
    <property type="entry name" value="P-loop containing nucleotide triphosphate hydrolases"/>
    <property type="match status" value="1"/>
</dbReference>
<dbReference type="HAMAP" id="MF_00348">
    <property type="entry name" value="RadA_arch"/>
    <property type="match status" value="1"/>
</dbReference>
<dbReference type="InterPro" id="IPR003593">
    <property type="entry name" value="AAA+_ATPase"/>
</dbReference>
<dbReference type="InterPro" id="IPR013632">
    <property type="entry name" value="DNA_recomb/repair_Rad51_C"/>
</dbReference>
<dbReference type="InterPro" id="IPR011938">
    <property type="entry name" value="DNA_recomb/repair_RadA"/>
</dbReference>
<dbReference type="InterPro" id="IPR016467">
    <property type="entry name" value="DNA_recomb/repair_RecA-like"/>
</dbReference>
<dbReference type="InterPro" id="IPR010995">
    <property type="entry name" value="DNA_repair_Rad51/TF_NusA_a-hlx"/>
</dbReference>
<dbReference type="InterPro" id="IPR027417">
    <property type="entry name" value="P-loop_NTPase"/>
</dbReference>
<dbReference type="InterPro" id="IPR020588">
    <property type="entry name" value="RecA_ATP-bd"/>
</dbReference>
<dbReference type="InterPro" id="IPR020587">
    <property type="entry name" value="RecA_monomer-monomer_interface"/>
</dbReference>
<dbReference type="NCBIfam" id="NF003301">
    <property type="entry name" value="PRK04301.1"/>
    <property type="match status" value="1"/>
</dbReference>
<dbReference type="NCBIfam" id="TIGR02236">
    <property type="entry name" value="recomb_radA"/>
    <property type="match status" value="1"/>
</dbReference>
<dbReference type="PANTHER" id="PTHR22942:SF30">
    <property type="entry name" value="MEIOTIC RECOMBINATION PROTEIN DMC1_LIM15 HOMOLOG"/>
    <property type="match status" value="1"/>
</dbReference>
<dbReference type="PANTHER" id="PTHR22942">
    <property type="entry name" value="RECA/RAD51/RADA DNA STRAND-PAIRING FAMILY MEMBER"/>
    <property type="match status" value="1"/>
</dbReference>
<dbReference type="Pfam" id="PF14520">
    <property type="entry name" value="HHH_5"/>
    <property type="match status" value="1"/>
</dbReference>
<dbReference type="Pfam" id="PF08423">
    <property type="entry name" value="Rad51"/>
    <property type="match status" value="1"/>
</dbReference>
<dbReference type="PIRSF" id="PIRSF005856">
    <property type="entry name" value="Rad51"/>
    <property type="match status" value="1"/>
</dbReference>
<dbReference type="SMART" id="SM00382">
    <property type="entry name" value="AAA"/>
    <property type="match status" value="1"/>
</dbReference>
<dbReference type="SUPFAM" id="SSF52540">
    <property type="entry name" value="P-loop containing nucleoside triphosphate hydrolases"/>
    <property type="match status" value="1"/>
</dbReference>
<dbReference type="SUPFAM" id="SSF47794">
    <property type="entry name" value="Rad51 N-terminal domain-like"/>
    <property type="match status" value="1"/>
</dbReference>
<dbReference type="PROSITE" id="PS50162">
    <property type="entry name" value="RECA_2"/>
    <property type="match status" value="1"/>
</dbReference>
<dbReference type="PROSITE" id="PS50163">
    <property type="entry name" value="RECA_3"/>
    <property type="match status" value="1"/>
</dbReference>
<name>RADA_AERPX</name>
<gene>
    <name type="primary">radA</name>
</gene>